<dbReference type="GO" id="GO:0005576">
    <property type="term" value="C:extracellular region"/>
    <property type="evidence" value="ECO:0007669"/>
    <property type="project" value="UniProtKB-SubCell"/>
</dbReference>
<dbReference type="GO" id="GO:0005179">
    <property type="term" value="F:hormone activity"/>
    <property type="evidence" value="ECO:0007669"/>
    <property type="project" value="UniProtKB-KW"/>
</dbReference>
<dbReference type="GO" id="GO:0007218">
    <property type="term" value="P:neuropeptide signaling pathway"/>
    <property type="evidence" value="ECO:0007669"/>
    <property type="project" value="UniProtKB-KW"/>
</dbReference>
<dbReference type="InterPro" id="IPR013152">
    <property type="entry name" value="Gastrin/cholecystokinin_CS"/>
</dbReference>
<dbReference type="InterPro" id="IPR013259">
    <property type="entry name" value="Sulfakinin"/>
</dbReference>
<dbReference type="Pfam" id="PF08257">
    <property type="entry name" value="Sulfakinin"/>
    <property type="match status" value="1"/>
</dbReference>
<dbReference type="PROSITE" id="PS00259">
    <property type="entry name" value="GASTRIN"/>
    <property type="match status" value="1"/>
</dbReference>
<protein>
    <recommendedName>
        <fullName evidence="4">Sulfakinin-1</fullName>
        <shortName evidence="4">PerFu-SK-1</shortName>
    </recommendedName>
</protein>
<name>SK1_PERFU</name>
<evidence type="ECO:0000250" key="1">
    <source>
        <dbReference type="UniProtKB" id="P41493"/>
    </source>
</evidence>
<evidence type="ECO:0000255" key="2"/>
<evidence type="ECO:0000269" key="3">
    <source>
    </source>
</evidence>
<evidence type="ECO:0000303" key="4">
    <source>
    </source>
</evidence>
<evidence type="ECO:0000305" key="5"/>
<proteinExistence type="evidence at protein level"/>
<comment type="function">
    <text evidence="1">Myotropic peptide.</text>
</comment>
<comment type="subcellular location">
    <subcellularLocation>
        <location evidence="5">Secreted</location>
    </subcellularLocation>
</comment>
<comment type="similarity">
    <text evidence="2">Belongs to the gastrin/cholecystokinin family.</text>
</comment>
<keyword id="KW-0027">Amidation</keyword>
<keyword id="KW-0903">Direct protein sequencing</keyword>
<keyword id="KW-0372">Hormone</keyword>
<keyword id="KW-0527">Neuropeptide</keyword>
<keyword id="KW-0964">Secreted</keyword>
<keyword id="KW-0765">Sulfation</keyword>
<feature type="peptide" id="PRO_0000378892" description="Sulfakinin-1" evidence="3">
    <location>
        <begin position="1"/>
        <end position="11"/>
    </location>
</feature>
<feature type="modified residue" description="Sulfotyrosine" evidence="1">
    <location>
        <position position="6"/>
    </location>
</feature>
<feature type="modified residue" description="Phenylalanine amide" evidence="3">
    <location>
        <position position="11"/>
    </location>
</feature>
<accession>P85716</accession>
<organism>
    <name type="scientific">Periplaneta fuliginosa</name>
    <name type="common">Smokybrown cockroach</name>
    <name type="synonym">Dusky-brown cockroach</name>
    <dbReference type="NCBI Taxonomy" id="36977"/>
    <lineage>
        <taxon>Eukaryota</taxon>
        <taxon>Metazoa</taxon>
        <taxon>Ecdysozoa</taxon>
        <taxon>Arthropoda</taxon>
        <taxon>Hexapoda</taxon>
        <taxon>Insecta</taxon>
        <taxon>Pterygota</taxon>
        <taxon>Neoptera</taxon>
        <taxon>Polyneoptera</taxon>
        <taxon>Dictyoptera</taxon>
        <taxon>Blattodea</taxon>
        <taxon>Blattoidea</taxon>
        <taxon>Blattidae</taxon>
        <taxon>Blattinae</taxon>
        <taxon>Periplaneta</taxon>
    </lineage>
</organism>
<reference evidence="5" key="1">
    <citation type="journal article" date="2009" name="BMC Evol. Biol.">
        <title>A proteomic approach for studying insect phylogeny: CAPA peptides of ancient insect taxa (Dictyoptera, Blattoptera) as a test case.</title>
        <authorList>
            <person name="Roth S."/>
            <person name="Fromm B."/>
            <person name="Gaede G."/>
            <person name="Predel R."/>
        </authorList>
    </citation>
    <scope>PROTEIN SEQUENCE</scope>
    <scope>AMIDATION AT PHE-11</scope>
    <source>
        <tissue evidence="3">Corpora cardiaca</tissue>
    </source>
</reference>
<sequence>EQFDDYGHMRF</sequence>